<evidence type="ECO:0000250" key="1">
    <source>
        <dbReference type="UniProtKB" id="Q5XHX8"/>
    </source>
</evidence>
<evidence type="ECO:0000250" key="2">
    <source>
        <dbReference type="UniProtKB" id="Q9JMB1"/>
    </source>
</evidence>
<evidence type="ECO:0000256" key="3">
    <source>
        <dbReference type="SAM" id="MobiDB-lite"/>
    </source>
</evidence>
<evidence type="ECO:0000269" key="4">
    <source>
    </source>
</evidence>
<evidence type="ECO:0000303" key="5">
    <source>
    </source>
</evidence>
<evidence type="ECO:0000312" key="6">
    <source>
        <dbReference type="HGNC" id="HGNC:13706"/>
    </source>
</evidence>
<dbReference type="EMBL" id="AF268610">
    <property type="protein sequence ID" value="AAG17663.1"/>
    <property type="molecule type" value="mRNA"/>
</dbReference>
<dbReference type="EMBL" id="AB033129">
    <property type="protein sequence ID" value="BAA93718.1"/>
    <property type="molecule type" value="mRNA"/>
</dbReference>
<dbReference type="EMBL" id="AC016588">
    <property type="status" value="NOT_ANNOTATED_CDS"/>
    <property type="molecule type" value="Genomic_DNA"/>
</dbReference>
<dbReference type="EMBL" id="CH471242">
    <property type="protein sequence ID" value="EAW61204.1"/>
    <property type="molecule type" value="Genomic_DNA"/>
</dbReference>
<dbReference type="EMBL" id="BC028574">
    <property type="protein sequence ID" value="AAH28574.1"/>
    <property type="molecule type" value="mRNA"/>
</dbReference>
<dbReference type="CCDS" id="CCDS12025.1">
    <molecule id="Q9P2T0-1"/>
</dbReference>
<dbReference type="CCDS" id="CCDS12026.1">
    <molecule id="Q9P2T0-2"/>
</dbReference>
<dbReference type="RefSeq" id="NP_057669.1">
    <molecule id="Q9P2T0-1"/>
    <property type="nucleotide sequence ID" value="NM_016585.5"/>
</dbReference>
<dbReference type="RefSeq" id="NP_954672.1">
    <molecule id="Q9P2T0-2"/>
    <property type="nucleotide sequence ID" value="NM_199202.3"/>
</dbReference>
<dbReference type="SMR" id="Q9P2T0"/>
<dbReference type="BioGRID" id="119449">
    <property type="interactions" value="11"/>
</dbReference>
<dbReference type="IntAct" id="Q9P2T0">
    <property type="interactions" value="14"/>
</dbReference>
<dbReference type="STRING" id="9606.ENSP00000340088"/>
<dbReference type="iPTMnet" id="Q9P2T0"/>
<dbReference type="PhosphoSitePlus" id="Q9P2T0"/>
<dbReference type="BioMuta" id="THEG"/>
<dbReference type="DMDM" id="74734914"/>
<dbReference type="MassIVE" id="Q9P2T0"/>
<dbReference type="PaxDb" id="9606-ENSP00000340088"/>
<dbReference type="PeptideAtlas" id="Q9P2T0"/>
<dbReference type="ProteomicsDB" id="83894">
    <molecule id="Q9P2T0-1"/>
</dbReference>
<dbReference type="ProteomicsDB" id="83895">
    <molecule id="Q9P2T0-2"/>
</dbReference>
<dbReference type="Antibodypedia" id="22292">
    <property type="antibodies" value="44 antibodies from 11 providers"/>
</dbReference>
<dbReference type="DNASU" id="51298"/>
<dbReference type="Ensembl" id="ENST00000342640.9">
    <molecule id="Q9P2T0-1"/>
    <property type="protein sequence ID" value="ENSP00000340088.3"/>
    <property type="gene ID" value="ENSG00000105549.11"/>
</dbReference>
<dbReference type="Ensembl" id="ENST00000346878.3">
    <molecule id="Q9P2T0-2"/>
    <property type="protein sequence ID" value="ENSP00000264820.3"/>
    <property type="gene ID" value="ENSG00000105549.11"/>
</dbReference>
<dbReference type="GeneID" id="51298"/>
<dbReference type="KEGG" id="hsa:51298"/>
<dbReference type="MANE-Select" id="ENST00000342640.9">
    <property type="protein sequence ID" value="ENSP00000340088.3"/>
    <property type="RefSeq nucleotide sequence ID" value="NM_016585.5"/>
    <property type="RefSeq protein sequence ID" value="NP_057669.1"/>
</dbReference>
<dbReference type="UCSC" id="uc002lol.3">
    <molecule id="Q9P2T0-1"/>
    <property type="organism name" value="human"/>
</dbReference>
<dbReference type="AGR" id="HGNC:13706"/>
<dbReference type="CTD" id="51298"/>
<dbReference type="DisGeNET" id="51298"/>
<dbReference type="GeneCards" id="SPMAP2"/>
<dbReference type="HGNC" id="HGNC:13706">
    <property type="gene designation" value="SPMAP2"/>
</dbReference>
<dbReference type="HPA" id="ENSG00000105549">
    <property type="expression patterns" value="Tissue enriched (testis)"/>
</dbReference>
<dbReference type="MIM" id="609503">
    <property type="type" value="gene"/>
</dbReference>
<dbReference type="neXtProt" id="NX_Q9P2T0"/>
<dbReference type="OpenTargets" id="ENSG00000105549"/>
<dbReference type="PharmGKB" id="PA134953737"/>
<dbReference type="VEuPathDB" id="HostDB:ENSG00000105549"/>
<dbReference type="eggNOG" id="ENOG502S0P4">
    <property type="taxonomic scope" value="Eukaryota"/>
</dbReference>
<dbReference type="GeneTree" id="ENSGT00940000154630"/>
<dbReference type="HOGENOM" id="CLU_061711_0_0_1"/>
<dbReference type="InParanoid" id="Q9P2T0"/>
<dbReference type="OMA" id="YAWISPR"/>
<dbReference type="PAN-GO" id="Q9P2T0">
    <property type="GO annotations" value="1 GO annotation based on evolutionary models"/>
</dbReference>
<dbReference type="PhylomeDB" id="Q9P2T0"/>
<dbReference type="TreeFam" id="TF329290"/>
<dbReference type="PathwayCommons" id="Q9P2T0"/>
<dbReference type="SignaLink" id="Q9P2T0"/>
<dbReference type="BioGRID-ORCS" id="51298">
    <property type="hits" value="9 hits in 1146 CRISPR screens"/>
</dbReference>
<dbReference type="GenomeRNAi" id="51298"/>
<dbReference type="Pharos" id="Q9P2T0">
    <property type="development level" value="Tdark"/>
</dbReference>
<dbReference type="PRO" id="PR:Q9P2T0"/>
<dbReference type="Proteomes" id="UP000005640">
    <property type="component" value="Chromosome 19"/>
</dbReference>
<dbReference type="RNAct" id="Q9P2T0">
    <property type="molecule type" value="protein"/>
</dbReference>
<dbReference type="Bgee" id="ENSG00000105549">
    <property type="expression patterns" value="Expressed in left testis and 48 other cell types or tissues"/>
</dbReference>
<dbReference type="ExpressionAtlas" id="Q9P2T0">
    <property type="expression patterns" value="baseline and differential"/>
</dbReference>
<dbReference type="GO" id="GO:0005634">
    <property type="term" value="C:nucleus"/>
    <property type="evidence" value="ECO:0007669"/>
    <property type="project" value="UniProtKB-SubCell"/>
</dbReference>
<dbReference type="GO" id="GO:0030154">
    <property type="term" value="P:cell differentiation"/>
    <property type="evidence" value="ECO:0007669"/>
    <property type="project" value="UniProtKB-KW"/>
</dbReference>
<dbReference type="GO" id="GO:0051131">
    <property type="term" value="P:chaperone-mediated protein complex assembly"/>
    <property type="evidence" value="ECO:0000304"/>
    <property type="project" value="ProtInc"/>
</dbReference>
<dbReference type="GO" id="GO:0007283">
    <property type="term" value="P:spermatogenesis"/>
    <property type="evidence" value="ECO:0000318"/>
    <property type="project" value="GO_Central"/>
</dbReference>
<dbReference type="InterPro" id="IPR042401">
    <property type="entry name" value="SPMAP2-like"/>
</dbReference>
<dbReference type="InterPro" id="IPR006623">
    <property type="entry name" value="THEG"/>
</dbReference>
<dbReference type="PANTHER" id="PTHR15901">
    <property type="entry name" value="TESTICULAR HAPLOID EXPRESSED GENE PROTEIN"/>
    <property type="match status" value="1"/>
</dbReference>
<dbReference type="PANTHER" id="PTHR15901:SF16">
    <property type="entry name" value="TESTICULAR HAPLOID EXPRESSED GENE PROTEIN"/>
    <property type="match status" value="1"/>
</dbReference>
<dbReference type="Pfam" id="PF14912">
    <property type="entry name" value="THEG"/>
    <property type="match status" value="3"/>
</dbReference>
<dbReference type="SMART" id="SM00705">
    <property type="entry name" value="THEG"/>
    <property type="match status" value="6"/>
</dbReference>
<proteinExistence type="evidence at protein level"/>
<reference key="1">
    <citation type="journal article" date="2000" name="Cytogenet. Cell Genet.">
        <title>Alternative splicing, chromosome assignment and subcellular localization of the testicular haploid expressed gene (THEG).</title>
        <authorList>
            <person name="Mannan A."/>
            <person name="Lucke K."/>
            <person name="Dixkens C."/>
            <person name="Neesen J."/>
            <person name="Kamper M."/>
            <person name="Engel W."/>
            <person name="Burfeind P."/>
        </authorList>
    </citation>
    <scope>NUCLEOTIDE SEQUENCE [MRNA] (ISOFORMS 1 AND 2)</scope>
    <scope>TISSUE SPECIFICITY</scope>
    <scope>ALTERNATIVE SPLICING</scope>
</reference>
<reference key="2">
    <citation type="journal article" date="2000" name="J. Biol. Chem.">
        <title>Insertional mutation of the murine kisimo locus caused a defect in spermatogenesis.</title>
        <authorList>
            <person name="Yanaka N."/>
            <person name="Kobayashi K."/>
            <person name="Wakimoto K."/>
            <person name="Yamada E."/>
            <person name="Imahie H."/>
            <person name="Imai Y."/>
            <person name="Mori C."/>
        </authorList>
    </citation>
    <scope>NUCLEOTIDE SEQUENCE [MRNA] (ISOFORM 1)</scope>
    <source>
        <tissue>Testis</tissue>
    </source>
</reference>
<reference key="3">
    <citation type="journal article" date="2004" name="Nature">
        <title>The DNA sequence and biology of human chromosome 19.</title>
        <authorList>
            <person name="Grimwood J."/>
            <person name="Gordon L.A."/>
            <person name="Olsen A.S."/>
            <person name="Terry A."/>
            <person name="Schmutz J."/>
            <person name="Lamerdin J.E."/>
            <person name="Hellsten U."/>
            <person name="Goodstein D."/>
            <person name="Couronne O."/>
            <person name="Tran-Gyamfi M."/>
            <person name="Aerts A."/>
            <person name="Altherr M."/>
            <person name="Ashworth L."/>
            <person name="Bajorek E."/>
            <person name="Black S."/>
            <person name="Branscomb E."/>
            <person name="Caenepeel S."/>
            <person name="Carrano A.V."/>
            <person name="Caoile C."/>
            <person name="Chan Y.M."/>
            <person name="Christensen M."/>
            <person name="Cleland C.A."/>
            <person name="Copeland A."/>
            <person name="Dalin E."/>
            <person name="Dehal P."/>
            <person name="Denys M."/>
            <person name="Detter J.C."/>
            <person name="Escobar J."/>
            <person name="Flowers D."/>
            <person name="Fotopulos D."/>
            <person name="Garcia C."/>
            <person name="Georgescu A.M."/>
            <person name="Glavina T."/>
            <person name="Gomez M."/>
            <person name="Gonzales E."/>
            <person name="Groza M."/>
            <person name="Hammon N."/>
            <person name="Hawkins T."/>
            <person name="Haydu L."/>
            <person name="Ho I."/>
            <person name="Huang W."/>
            <person name="Israni S."/>
            <person name="Jett J."/>
            <person name="Kadner K."/>
            <person name="Kimball H."/>
            <person name="Kobayashi A."/>
            <person name="Larionov V."/>
            <person name="Leem S.-H."/>
            <person name="Lopez F."/>
            <person name="Lou Y."/>
            <person name="Lowry S."/>
            <person name="Malfatti S."/>
            <person name="Martinez D."/>
            <person name="McCready P.M."/>
            <person name="Medina C."/>
            <person name="Morgan J."/>
            <person name="Nelson K."/>
            <person name="Nolan M."/>
            <person name="Ovcharenko I."/>
            <person name="Pitluck S."/>
            <person name="Pollard M."/>
            <person name="Popkie A.P."/>
            <person name="Predki P."/>
            <person name="Quan G."/>
            <person name="Ramirez L."/>
            <person name="Rash S."/>
            <person name="Retterer J."/>
            <person name="Rodriguez A."/>
            <person name="Rogers S."/>
            <person name="Salamov A."/>
            <person name="Salazar A."/>
            <person name="She X."/>
            <person name="Smith D."/>
            <person name="Slezak T."/>
            <person name="Solovyev V."/>
            <person name="Thayer N."/>
            <person name="Tice H."/>
            <person name="Tsai M."/>
            <person name="Ustaszewska A."/>
            <person name="Vo N."/>
            <person name="Wagner M."/>
            <person name="Wheeler J."/>
            <person name="Wu K."/>
            <person name="Xie G."/>
            <person name="Yang J."/>
            <person name="Dubchak I."/>
            <person name="Furey T.S."/>
            <person name="DeJong P."/>
            <person name="Dickson M."/>
            <person name="Gordon D."/>
            <person name="Eichler E.E."/>
            <person name="Pennacchio L.A."/>
            <person name="Richardson P."/>
            <person name="Stubbs L."/>
            <person name="Rokhsar D.S."/>
            <person name="Myers R.M."/>
            <person name="Rubin E.M."/>
            <person name="Lucas S.M."/>
        </authorList>
    </citation>
    <scope>NUCLEOTIDE SEQUENCE [LARGE SCALE GENOMIC DNA]</scope>
</reference>
<reference key="4">
    <citation type="submission" date="2005-07" db="EMBL/GenBank/DDBJ databases">
        <authorList>
            <person name="Mural R.J."/>
            <person name="Istrail S."/>
            <person name="Sutton G.G."/>
            <person name="Florea L."/>
            <person name="Halpern A.L."/>
            <person name="Mobarry C.M."/>
            <person name="Lippert R."/>
            <person name="Walenz B."/>
            <person name="Shatkay H."/>
            <person name="Dew I."/>
            <person name="Miller J.R."/>
            <person name="Flanigan M.J."/>
            <person name="Edwards N.J."/>
            <person name="Bolanos R."/>
            <person name="Fasulo D."/>
            <person name="Halldorsson B.V."/>
            <person name="Hannenhalli S."/>
            <person name="Turner R."/>
            <person name="Yooseph S."/>
            <person name="Lu F."/>
            <person name="Nusskern D.R."/>
            <person name="Shue B.C."/>
            <person name="Zheng X.H."/>
            <person name="Zhong F."/>
            <person name="Delcher A.L."/>
            <person name="Huson D.H."/>
            <person name="Kravitz S.A."/>
            <person name="Mouchard L."/>
            <person name="Reinert K."/>
            <person name="Remington K.A."/>
            <person name="Clark A.G."/>
            <person name="Waterman M.S."/>
            <person name="Eichler E.E."/>
            <person name="Adams M.D."/>
            <person name="Hunkapiller M.W."/>
            <person name="Myers E.W."/>
            <person name="Venter J.C."/>
        </authorList>
    </citation>
    <scope>NUCLEOTIDE SEQUENCE [LARGE SCALE GENOMIC DNA]</scope>
</reference>
<reference key="5">
    <citation type="journal article" date="2004" name="Genome Res.">
        <title>The status, quality, and expansion of the NIH full-length cDNA project: the Mammalian Gene Collection (MGC).</title>
        <authorList>
            <consortium name="The MGC Project Team"/>
        </authorList>
    </citation>
    <scope>NUCLEOTIDE SEQUENCE [LARGE SCALE MRNA]</scope>
    <source>
        <tissue>Testis</tissue>
    </source>
</reference>
<accession>Q9P2T0</accession>
<accession>A6NMJ8</accession>
<keyword id="KW-0025">Alternative splicing</keyword>
<keyword id="KW-0217">Developmental protein</keyword>
<keyword id="KW-0221">Differentiation</keyword>
<keyword id="KW-0539">Nucleus</keyword>
<keyword id="KW-0597">Phosphoprotein</keyword>
<keyword id="KW-1267">Proteomics identification</keyword>
<keyword id="KW-1185">Reference proteome</keyword>
<keyword id="KW-0677">Repeat</keyword>
<keyword id="KW-0744">Spermatogenesis</keyword>
<sequence length="379" mass="43444">MGDSRRRSLGNQPSSEAAGRSEREQDGDPRGLQSSVYESRRVTDPERQDLDNAELGPEDPEEELPPEEVAGEEFPETLDPKEALSELERVLDKDLEEDIPEISRLSISQKLPSTTMTKARKRRRRRRLMELAEPKINWQVLKDRKGRCGKGYAWISPCKMSLHFCLCWPSVYWTERFLEDTTLTITVPAVSRRVEELSRPKRFYLEYYNNNRTTPVWPIPRSSLEYRASSRLKELAAPKIRDNFWSMPMSEVSQVSRAAQMAVPSSRILQLSKPKAPATLLEEWDPVPKPKPHVSDHNRLLHLARPKAQSDKCVPDRDPRWEVLDVTKKVVASPRIISLAKPKVRKGLNEGYDRRPLASMSLPPPKASPEKCDQPRPGL</sequence>
<gene>
    <name evidence="6" type="primary">SPMAP2</name>
    <name evidence="5" type="synonym">THEG</name>
</gene>
<organism>
    <name type="scientific">Homo sapiens</name>
    <name type="common">Human</name>
    <dbReference type="NCBI Taxonomy" id="9606"/>
    <lineage>
        <taxon>Eukaryota</taxon>
        <taxon>Metazoa</taxon>
        <taxon>Chordata</taxon>
        <taxon>Craniata</taxon>
        <taxon>Vertebrata</taxon>
        <taxon>Euteleostomi</taxon>
        <taxon>Mammalia</taxon>
        <taxon>Eutheria</taxon>
        <taxon>Euarchontoglires</taxon>
        <taxon>Primates</taxon>
        <taxon>Haplorrhini</taxon>
        <taxon>Catarrhini</taxon>
        <taxon>Hominidae</taxon>
        <taxon>Homo</taxon>
    </lineage>
</organism>
<comment type="function">
    <text evidence="2">May be involved (but not essential) in spermatogenesis.</text>
</comment>
<comment type="subunit">
    <text evidence="2">Interacts with CCT5.</text>
</comment>
<comment type="interaction">
    <interactant intactId="EBI-751020">
        <id>Q9P2T0</id>
    </interactant>
    <interactant intactId="EBI-750300">
        <id>Q01658</id>
        <label>DR1</label>
    </interactant>
    <organismsDiffer>false</organismsDiffer>
    <experiments>3</experiments>
</comment>
<comment type="interaction">
    <interactant intactId="EBI-751020">
        <id>Q9P2T0</id>
    </interactant>
    <interactant intactId="EBI-741101">
        <id>Q13643</id>
        <label>FHL3</label>
    </interactant>
    <organismsDiffer>false</organismsDiffer>
    <experiments>4</experiments>
</comment>
<comment type="interaction">
    <interactant intactId="EBI-751020">
        <id>Q9P2T0</id>
    </interactant>
    <interactant intactId="EBI-351506">
        <id>P06396</id>
        <label>GSN</label>
    </interactant>
    <organismsDiffer>false</organismsDiffer>
    <experiments>3</experiments>
</comment>
<comment type="interaction">
    <interactant intactId="EBI-751020">
        <id>Q9P2T0</id>
    </interactant>
    <interactant intactId="EBI-473886">
        <id>O00291</id>
        <label>HIP1</label>
    </interactant>
    <organismsDiffer>false</organismsDiffer>
    <experiments>3</experiments>
</comment>
<comment type="interaction">
    <interactant intactId="EBI-751020">
        <id>Q9P2T0</id>
    </interactant>
    <interactant intactId="EBI-21591415">
        <id>P13473-2</id>
        <label>LAMP2</label>
    </interactant>
    <organismsDiffer>false</organismsDiffer>
    <experiments>3</experiments>
</comment>
<comment type="interaction">
    <interactant intactId="EBI-751020">
        <id>Q9P2T0</id>
    </interactant>
    <interactant intactId="EBI-724076">
        <id>Q99750</id>
        <label>MDFI</label>
    </interactant>
    <organismsDiffer>false</organismsDiffer>
    <experiments>3</experiments>
</comment>
<comment type="subcellular location">
    <subcellularLocation>
        <location evidence="2">Nucleus</location>
    </subcellularLocation>
    <text evidence="2">Localized predominantly in the nucleus of haploid round spermatid.</text>
</comment>
<comment type="alternative products">
    <event type="alternative splicing"/>
    <isoform>
        <id>Q9P2T0-1</id>
        <name>1</name>
        <name>THEG major</name>
        <sequence type="displayed"/>
    </isoform>
    <isoform>
        <id>Q9P2T0-2</id>
        <name>2</name>
        <name>THEG minor</name>
        <sequence type="described" ref="VSP_028446"/>
    </isoform>
</comment>
<comment type="tissue specificity">
    <text evidence="4">Testis specific.</text>
</comment>
<protein>
    <recommendedName>
        <fullName evidence="6">Sperm microtubule associated protein 2</fullName>
    </recommendedName>
    <alternativeName>
        <fullName>Cancer/testis antigen 56</fullName>
        <shortName>CT56</shortName>
    </alternativeName>
    <alternativeName>
        <fullName evidence="5">Testicular haploid expressed gene protein</fullName>
    </alternativeName>
</protein>
<name>SPMA2_HUMAN</name>
<feature type="chain" id="PRO_0000306267" description="Sperm microtubule associated protein 2">
    <location>
        <begin position="1"/>
        <end position="379"/>
    </location>
</feature>
<feature type="repeat" description="THEG 1">
    <location>
        <begin position="118"/>
        <end position="137"/>
    </location>
</feature>
<feature type="repeat" description="THEG 2">
    <location>
        <begin position="184"/>
        <end position="203"/>
    </location>
</feature>
<feature type="repeat" description="THEG 3">
    <location>
        <begin position="222"/>
        <end position="241"/>
    </location>
</feature>
<feature type="repeat" description="THEG 4">
    <location>
        <begin position="258"/>
        <end position="277"/>
    </location>
</feature>
<feature type="repeat" description="THEG 5">
    <location>
        <begin position="290"/>
        <end position="309"/>
    </location>
</feature>
<feature type="repeat" description="THEG 6">
    <location>
        <begin position="326"/>
        <end position="345"/>
    </location>
</feature>
<feature type="region of interest" description="Disordered" evidence="3">
    <location>
        <begin position="1"/>
        <end position="82"/>
    </location>
</feature>
<feature type="region of interest" description="Disordered" evidence="3">
    <location>
        <begin position="344"/>
        <end position="379"/>
    </location>
</feature>
<feature type="compositionally biased region" description="Basic and acidic residues" evidence="3">
    <location>
        <begin position="19"/>
        <end position="29"/>
    </location>
</feature>
<feature type="compositionally biased region" description="Basic and acidic residues" evidence="3">
    <location>
        <begin position="38"/>
        <end position="50"/>
    </location>
</feature>
<feature type="compositionally biased region" description="Acidic residues" evidence="3">
    <location>
        <begin position="56"/>
        <end position="76"/>
    </location>
</feature>
<feature type="compositionally biased region" description="Basic and acidic residues" evidence="3">
    <location>
        <begin position="347"/>
        <end position="356"/>
    </location>
</feature>
<feature type="compositionally biased region" description="Basic and acidic residues" evidence="3">
    <location>
        <begin position="368"/>
        <end position="379"/>
    </location>
</feature>
<feature type="modified residue" description="Phosphoserine" evidence="1">
    <location>
        <position position="295"/>
    </location>
</feature>
<feature type="splice variant" id="VSP_028446" description="In isoform 2." evidence="5">
    <location>
        <begin position="145"/>
        <end position="168"/>
    </location>
</feature>
<feature type="sequence variant" id="VAR_035286" description="In dbSNP:rs2303810.">
    <original>R</original>
    <variation>I</variation>
    <location>
        <position position="202"/>
    </location>
</feature>
<feature type="sequence variant" id="VAR_035287" description="In dbSNP:rs2278287.">
    <original>R</original>
    <variation>Q</variation>
    <location>
        <position position="267"/>
    </location>
</feature>
<feature type="sequence variant" id="VAR_035288" description="In dbSNP:rs10422863.">
    <original>H</original>
    <variation>Y</variation>
    <location>
        <position position="297"/>
    </location>
</feature>
<feature type="sequence variant" id="VAR_035289" description="In dbSNP:rs3764656.">
    <original>D</original>
    <variation>N</variation>
    <location>
        <position position="353"/>
    </location>
</feature>